<protein>
    <recommendedName>
        <fullName evidence="1">Eukaryotic translation initiation factor 3 subunit G</fullName>
        <shortName evidence="1">eIF3g</shortName>
    </recommendedName>
    <alternativeName>
        <fullName evidence="1">Eukaryotic translation initiation factor 3 RNA-binding subunit</fullName>
        <shortName evidence="1">eIF-3 RNA-binding subunit</shortName>
    </alternativeName>
    <alternativeName>
        <fullName evidence="1">Eukaryotic translation initiation factor 3 subunit 4</fullName>
    </alternativeName>
</protein>
<comment type="function">
    <text evidence="1">RNA-binding component of the eukaryotic translation initiation factor 3 (eIF-3) complex, which is involved in protein synthesis of a specialized repertoire of mRNAs and, together with other initiation factors, stimulates binding of mRNA and methionyl-tRNAi to the 40S ribosome. The eIF-3 complex specifically targets and initiates translation of a subset of mRNAs involved in cell proliferation. This subunit can bind 18S rRNA.</text>
</comment>
<comment type="subunit">
    <text evidence="1">Component of the eukaryotic translation initiation factor 3 (eIF-3) complex, which is composed of 13 subunits: eif3a, eif3b, eif3c, eif3d, eif3e, eif3f, eif3g, eif3h, eif3i, eif3j, eif3k, eif3l and eif3m.</text>
</comment>
<comment type="subcellular location">
    <subcellularLocation>
        <location evidence="1">Cytoplasm</location>
    </subcellularLocation>
</comment>
<comment type="similarity">
    <text evidence="1">Belongs to the eIF-3 subunit G family.</text>
</comment>
<accession>Q28CY2</accession>
<proteinExistence type="evidence at transcript level"/>
<feature type="chain" id="PRO_0000365400" description="Eukaryotic translation initiation factor 3 subunit G">
    <location>
        <begin position="1"/>
        <end position="310"/>
    </location>
</feature>
<feature type="domain" description="RRM" evidence="1">
    <location>
        <begin position="229"/>
        <end position="307"/>
    </location>
</feature>
<feature type="region of interest" description="Disordered" evidence="2">
    <location>
        <begin position="1"/>
        <end position="32"/>
    </location>
</feature>
<feature type="region of interest" description="Disordered" evidence="2">
    <location>
        <begin position="179"/>
        <end position="229"/>
    </location>
</feature>
<feature type="compositionally biased region" description="Low complexity" evidence="2">
    <location>
        <begin position="187"/>
        <end position="196"/>
    </location>
</feature>
<feature type="compositionally biased region" description="Basic and acidic residues" evidence="2">
    <location>
        <begin position="211"/>
        <end position="229"/>
    </location>
</feature>
<name>EIF3G_XENTR</name>
<gene>
    <name type="primary">eif3g</name>
    <name type="synonym">eif3s4</name>
    <name type="ORF">TTpA012f15.1</name>
</gene>
<keyword id="KW-0963">Cytoplasm</keyword>
<keyword id="KW-0396">Initiation factor</keyword>
<keyword id="KW-0648">Protein biosynthesis</keyword>
<keyword id="KW-1185">Reference proteome</keyword>
<keyword id="KW-0694">RNA-binding</keyword>
<sequence length="310" mass="34573">MPTEDYDSKPSWADQVEEEGIDPEPISPPVTKVQQDPASFVLDTPQEVINGKIKTITEYKLNDEGKKIKIVRTFKIETLKASKVVAHRKNWKKFGNSEYDPPGPNVATTTVSDDVLMTFITSKEDLNNQEEEDPMNKLKGQKIVSCRICKGDHWTTRCPYKDTLGPMQKELAEQLGLSTGDKEKAPGAEPEPAQAPVSKTGKYVPPSLRDGGSRRGESMQPNRRADDNATIRVTNLSEDTRETDLQELFRPFGSISRIYLAKDKTTGQSKGFAFISFHRREDAARAIAGVSGFGYDHLILNVEWAKPSTN</sequence>
<organism>
    <name type="scientific">Xenopus tropicalis</name>
    <name type="common">Western clawed frog</name>
    <name type="synonym">Silurana tropicalis</name>
    <dbReference type="NCBI Taxonomy" id="8364"/>
    <lineage>
        <taxon>Eukaryota</taxon>
        <taxon>Metazoa</taxon>
        <taxon>Chordata</taxon>
        <taxon>Craniata</taxon>
        <taxon>Vertebrata</taxon>
        <taxon>Euteleostomi</taxon>
        <taxon>Amphibia</taxon>
        <taxon>Batrachia</taxon>
        <taxon>Anura</taxon>
        <taxon>Pipoidea</taxon>
        <taxon>Pipidae</taxon>
        <taxon>Xenopodinae</taxon>
        <taxon>Xenopus</taxon>
        <taxon>Silurana</taxon>
    </lineage>
</organism>
<reference key="1">
    <citation type="submission" date="2006-10" db="EMBL/GenBank/DDBJ databases">
        <authorList>
            <consortium name="Sanger Xenopus tropicalis EST/cDNA project"/>
        </authorList>
    </citation>
    <scope>NUCLEOTIDE SEQUENCE [LARGE SCALE MRNA]</scope>
    <source>
        <tissue>Tadpole</tissue>
    </source>
</reference>
<reference key="2">
    <citation type="submission" date="2008-01" db="EMBL/GenBank/DDBJ databases">
        <authorList>
            <consortium name="NIH - Xenopus Gene Collection (XGC) project"/>
        </authorList>
    </citation>
    <scope>NUCLEOTIDE SEQUENCE [LARGE SCALE MRNA]</scope>
    <source>
        <tissue>Embryo</tissue>
    </source>
</reference>
<dbReference type="EMBL" id="CR855811">
    <property type="protein sequence ID" value="CAJ83120.1"/>
    <property type="molecule type" value="mRNA"/>
</dbReference>
<dbReference type="EMBL" id="BC158150">
    <property type="protein sequence ID" value="AAI58151.1"/>
    <property type="molecule type" value="mRNA"/>
</dbReference>
<dbReference type="RefSeq" id="NP_001016749.1">
    <property type="nucleotide sequence ID" value="NM_001016749.1"/>
</dbReference>
<dbReference type="BMRB" id="Q28CY2"/>
<dbReference type="SMR" id="Q28CY2"/>
<dbReference type="FunCoup" id="Q28CY2">
    <property type="interactions" value="2439"/>
</dbReference>
<dbReference type="STRING" id="8364.ENSXETP00000036976"/>
<dbReference type="PaxDb" id="8364-ENSXETP00000058707"/>
<dbReference type="GeneID" id="549503"/>
<dbReference type="KEGG" id="xtr:549503"/>
<dbReference type="AGR" id="Xenbase:XB-GENE-6070198"/>
<dbReference type="CTD" id="8666"/>
<dbReference type="Xenbase" id="XB-GENE-6070198">
    <property type="gene designation" value="eif3g"/>
</dbReference>
<dbReference type="eggNOG" id="KOG0122">
    <property type="taxonomic scope" value="Eukaryota"/>
</dbReference>
<dbReference type="HOGENOM" id="CLU_034595_0_0_1"/>
<dbReference type="InParanoid" id="Q28CY2"/>
<dbReference type="OMA" id="ICQGDHF"/>
<dbReference type="OrthoDB" id="1749473at2759"/>
<dbReference type="PhylomeDB" id="Q28CY2"/>
<dbReference type="Reactome" id="R-XTR-156827">
    <property type="pathway name" value="L13a-mediated translational silencing of Ceruloplasmin expression"/>
</dbReference>
<dbReference type="Reactome" id="R-XTR-72689">
    <property type="pathway name" value="Formation of a pool of free 40S subunits"/>
</dbReference>
<dbReference type="Reactome" id="R-XTR-72695">
    <property type="pathway name" value="Formation of the ternary complex, and subsequently, the 43S complex"/>
</dbReference>
<dbReference type="Reactome" id="R-XTR-72702">
    <property type="pathway name" value="Ribosomal scanning and start codon recognition"/>
</dbReference>
<dbReference type="Proteomes" id="UP000008143">
    <property type="component" value="Chromosome 3"/>
</dbReference>
<dbReference type="Bgee" id="ENSXETG00000027008">
    <property type="expression patterns" value="Expressed in testis and 18 other cell types or tissues"/>
</dbReference>
<dbReference type="GO" id="GO:0016282">
    <property type="term" value="C:eukaryotic 43S preinitiation complex"/>
    <property type="evidence" value="ECO:0007669"/>
    <property type="project" value="UniProtKB-UniRule"/>
</dbReference>
<dbReference type="GO" id="GO:0033290">
    <property type="term" value="C:eukaryotic 48S preinitiation complex"/>
    <property type="evidence" value="ECO:0007669"/>
    <property type="project" value="UniProtKB-UniRule"/>
</dbReference>
<dbReference type="GO" id="GO:0005852">
    <property type="term" value="C:eukaryotic translation initiation factor 3 complex"/>
    <property type="evidence" value="ECO:0000250"/>
    <property type="project" value="UniProtKB"/>
</dbReference>
<dbReference type="GO" id="GO:0003723">
    <property type="term" value="F:RNA binding"/>
    <property type="evidence" value="ECO:0007669"/>
    <property type="project" value="UniProtKB-UniRule"/>
</dbReference>
<dbReference type="GO" id="GO:0003743">
    <property type="term" value="F:translation initiation factor activity"/>
    <property type="evidence" value="ECO:0007669"/>
    <property type="project" value="UniProtKB-UniRule"/>
</dbReference>
<dbReference type="GO" id="GO:0001732">
    <property type="term" value="P:formation of cytoplasmic translation initiation complex"/>
    <property type="evidence" value="ECO:0007669"/>
    <property type="project" value="UniProtKB-UniRule"/>
</dbReference>
<dbReference type="GO" id="GO:0006413">
    <property type="term" value="P:translational initiation"/>
    <property type="evidence" value="ECO:0000250"/>
    <property type="project" value="UniProtKB"/>
</dbReference>
<dbReference type="CDD" id="cd12933">
    <property type="entry name" value="eIF3G"/>
    <property type="match status" value="1"/>
</dbReference>
<dbReference type="CDD" id="cd12408">
    <property type="entry name" value="RRM_eIF3G_like"/>
    <property type="match status" value="1"/>
</dbReference>
<dbReference type="FunFam" id="3.30.70.330:FF:000194">
    <property type="entry name" value="Eukaryotic translation initiation factor 3 subunit G"/>
    <property type="match status" value="1"/>
</dbReference>
<dbReference type="Gene3D" id="3.30.70.330">
    <property type="match status" value="1"/>
</dbReference>
<dbReference type="HAMAP" id="MF_03006">
    <property type="entry name" value="eIF3g"/>
    <property type="match status" value="1"/>
</dbReference>
<dbReference type="InterPro" id="IPR017334">
    <property type="entry name" value="eIF3_g"/>
</dbReference>
<dbReference type="InterPro" id="IPR024675">
    <property type="entry name" value="eIF3g_N"/>
</dbReference>
<dbReference type="InterPro" id="IPR034240">
    <property type="entry name" value="eIF3G_RRM"/>
</dbReference>
<dbReference type="InterPro" id="IPR012677">
    <property type="entry name" value="Nucleotide-bd_a/b_plait_sf"/>
</dbReference>
<dbReference type="InterPro" id="IPR035979">
    <property type="entry name" value="RBD_domain_sf"/>
</dbReference>
<dbReference type="InterPro" id="IPR000504">
    <property type="entry name" value="RRM_dom"/>
</dbReference>
<dbReference type="PANTHER" id="PTHR10352">
    <property type="entry name" value="EUKARYOTIC TRANSLATION INITIATION FACTOR 3 SUBUNIT G"/>
    <property type="match status" value="1"/>
</dbReference>
<dbReference type="Pfam" id="PF12353">
    <property type="entry name" value="eIF3g"/>
    <property type="match status" value="1"/>
</dbReference>
<dbReference type="Pfam" id="PF00076">
    <property type="entry name" value="RRM_1"/>
    <property type="match status" value="1"/>
</dbReference>
<dbReference type="PIRSF" id="PIRSF037949">
    <property type="entry name" value="Transl_init_eIF-3_RNA-bind"/>
    <property type="match status" value="1"/>
</dbReference>
<dbReference type="SMART" id="SM00360">
    <property type="entry name" value="RRM"/>
    <property type="match status" value="1"/>
</dbReference>
<dbReference type="SUPFAM" id="SSF54928">
    <property type="entry name" value="RNA-binding domain, RBD"/>
    <property type="match status" value="1"/>
</dbReference>
<dbReference type="PROSITE" id="PS50102">
    <property type="entry name" value="RRM"/>
    <property type="match status" value="1"/>
</dbReference>
<evidence type="ECO:0000255" key="1">
    <source>
        <dbReference type="HAMAP-Rule" id="MF_03006"/>
    </source>
</evidence>
<evidence type="ECO:0000256" key="2">
    <source>
        <dbReference type="SAM" id="MobiDB-lite"/>
    </source>
</evidence>